<proteinExistence type="inferred from homology"/>
<gene>
    <name evidence="1" type="primary">selD</name>
    <name type="ordered locus">Sbal_4182</name>
</gene>
<dbReference type="EC" id="2.7.9.3" evidence="1"/>
<dbReference type="EMBL" id="CP000563">
    <property type="protein sequence ID" value="ABN63647.1"/>
    <property type="molecule type" value="Genomic_DNA"/>
</dbReference>
<dbReference type="RefSeq" id="WP_011848157.1">
    <property type="nucleotide sequence ID" value="NC_009052.1"/>
</dbReference>
<dbReference type="SMR" id="A3DA84"/>
<dbReference type="STRING" id="325240.Sbal_4182"/>
<dbReference type="KEGG" id="sbl:Sbal_4182"/>
<dbReference type="HOGENOM" id="CLU_032859_0_1_6"/>
<dbReference type="OrthoDB" id="9767928at2"/>
<dbReference type="Proteomes" id="UP000001557">
    <property type="component" value="Chromosome"/>
</dbReference>
<dbReference type="GO" id="GO:0005737">
    <property type="term" value="C:cytoplasm"/>
    <property type="evidence" value="ECO:0007669"/>
    <property type="project" value="TreeGrafter"/>
</dbReference>
<dbReference type="GO" id="GO:0005524">
    <property type="term" value="F:ATP binding"/>
    <property type="evidence" value="ECO:0007669"/>
    <property type="project" value="UniProtKB-UniRule"/>
</dbReference>
<dbReference type="GO" id="GO:0000287">
    <property type="term" value="F:magnesium ion binding"/>
    <property type="evidence" value="ECO:0007669"/>
    <property type="project" value="UniProtKB-UniRule"/>
</dbReference>
<dbReference type="GO" id="GO:0004756">
    <property type="term" value="F:selenide, water dikinase activity"/>
    <property type="evidence" value="ECO:0007669"/>
    <property type="project" value="UniProtKB-UniRule"/>
</dbReference>
<dbReference type="GO" id="GO:0016260">
    <property type="term" value="P:selenocysteine biosynthetic process"/>
    <property type="evidence" value="ECO:0007669"/>
    <property type="project" value="InterPro"/>
</dbReference>
<dbReference type="CDD" id="cd02195">
    <property type="entry name" value="SelD"/>
    <property type="match status" value="1"/>
</dbReference>
<dbReference type="FunFam" id="3.30.1330.10:FF:000003">
    <property type="entry name" value="Selenide, water dikinase"/>
    <property type="match status" value="1"/>
</dbReference>
<dbReference type="FunFam" id="3.90.650.10:FF:000004">
    <property type="entry name" value="Selenide, water dikinase"/>
    <property type="match status" value="1"/>
</dbReference>
<dbReference type="Gene3D" id="3.90.650.10">
    <property type="entry name" value="PurM-like C-terminal domain"/>
    <property type="match status" value="1"/>
</dbReference>
<dbReference type="Gene3D" id="3.30.1330.10">
    <property type="entry name" value="PurM-like, N-terminal domain"/>
    <property type="match status" value="1"/>
</dbReference>
<dbReference type="HAMAP" id="MF_00625">
    <property type="entry name" value="SelD"/>
    <property type="match status" value="1"/>
</dbReference>
<dbReference type="InterPro" id="IPR010918">
    <property type="entry name" value="PurM-like_C_dom"/>
</dbReference>
<dbReference type="InterPro" id="IPR036676">
    <property type="entry name" value="PurM-like_C_sf"/>
</dbReference>
<dbReference type="InterPro" id="IPR016188">
    <property type="entry name" value="PurM-like_N"/>
</dbReference>
<dbReference type="InterPro" id="IPR036921">
    <property type="entry name" value="PurM-like_N_sf"/>
</dbReference>
<dbReference type="InterPro" id="IPR023061">
    <property type="entry name" value="SelD_I"/>
</dbReference>
<dbReference type="InterPro" id="IPR004536">
    <property type="entry name" value="SPS/SelD"/>
</dbReference>
<dbReference type="NCBIfam" id="NF002098">
    <property type="entry name" value="PRK00943.1"/>
    <property type="match status" value="1"/>
</dbReference>
<dbReference type="NCBIfam" id="TIGR00476">
    <property type="entry name" value="selD"/>
    <property type="match status" value="1"/>
</dbReference>
<dbReference type="PANTHER" id="PTHR10256:SF0">
    <property type="entry name" value="INACTIVE SELENIDE, WATER DIKINASE-LIKE PROTEIN-RELATED"/>
    <property type="match status" value="1"/>
</dbReference>
<dbReference type="PANTHER" id="PTHR10256">
    <property type="entry name" value="SELENIDE, WATER DIKINASE"/>
    <property type="match status" value="1"/>
</dbReference>
<dbReference type="Pfam" id="PF00586">
    <property type="entry name" value="AIRS"/>
    <property type="match status" value="1"/>
</dbReference>
<dbReference type="Pfam" id="PF02769">
    <property type="entry name" value="AIRS_C"/>
    <property type="match status" value="1"/>
</dbReference>
<dbReference type="PIRSF" id="PIRSF036407">
    <property type="entry name" value="Selenphspht_syn"/>
    <property type="match status" value="1"/>
</dbReference>
<dbReference type="SUPFAM" id="SSF56042">
    <property type="entry name" value="PurM C-terminal domain-like"/>
    <property type="match status" value="1"/>
</dbReference>
<dbReference type="SUPFAM" id="SSF55326">
    <property type="entry name" value="PurM N-terminal domain-like"/>
    <property type="match status" value="1"/>
</dbReference>
<sequence>MSDSPVTLPESIKLTEYSHGAGCGCKISPKVLSTILASQLPVFTDPNLLVGNQSRDDAAVYKLNDDIGIISTTDFFMPIVDDPFTFGRIAATNAISDIYAMGGTPIMAIAILGWPINKLPAEVAQQVVDGGRQACMEAGIMLAGGHSIDAPEPIFGLAVTGQIALTDLKQNDTAKAGDRLYLTKPIGIGILTTAQKQKKLQDEDSHIAVNAMCQLNTIGTTIAKISGVNALTDVTGFGLAGHLLEMCQGAKLTAKLKFDAVPLLPRALDYLALGCVPGGTHRNYDSYGEHLPELSEHQKAILCDPQTSGGLLVAVSAEAEAELIDLLDAHHIAPICIGSLETPTTEVNVVLC</sequence>
<name>SELD_SHEB5</name>
<evidence type="ECO:0000255" key="1">
    <source>
        <dbReference type="HAMAP-Rule" id="MF_00625"/>
    </source>
</evidence>
<comment type="function">
    <text evidence="1">Synthesizes selenophosphate from selenide and ATP.</text>
</comment>
<comment type="catalytic activity">
    <reaction evidence="1">
        <text>hydrogenselenide + ATP + H2O = selenophosphate + AMP + phosphate + 2 H(+)</text>
        <dbReference type="Rhea" id="RHEA:18737"/>
        <dbReference type="ChEBI" id="CHEBI:15377"/>
        <dbReference type="ChEBI" id="CHEBI:15378"/>
        <dbReference type="ChEBI" id="CHEBI:16144"/>
        <dbReference type="ChEBI" id="CHEBI:29317"/>
        <dbReference type="ChEBI" id="CHEBI:30616"/>
        <dbReference type="ChEBI" id="CHEBI:43474"/>
        <dbReference type="ChEBI" id="CHEBI:456215"/>
        <dbReference type="EC" id="2.7.9.3"/>
    </reaction>
</comment>
<comment type="cofactor">
    <cofactor evidence="1">
        <name>Mg(2+)</name>
        <dbReference type="ChEBI" id="CHEBI:18420"/>
    </cofactor>
    <text evidence="1">Binds 1 Mg(2+) ion per monomer.</text>
</comment>
<comment type="subunit">
    <text evidence="1">Homodimer.</text>
</comment>
<comment type="similarity">
    <text evidence="1">Belongs to the selenophosphate synthase 1 family. Class I subfamily.</text>
</comment>
<keyword id="KW-0067">ATP-binding</keyword>
<keyword id="KW-0418">Kinase</keyword>
<keyword id="KW-0460">Magnesium</keyword>
<keyword id="KW-0479">Metal-binding</keyword>
<keyword id="KW-0547">Nucleotide-binding</keyword>
<keyword id="KW-1185">Reference proteome</keyword>
<keyword id="KW-0711">Selenium</keyword>
<keyword id="KW-0808">Transferase</keyword>
<accession>A3DA84</accession>
<protein>
    <recommendedName>
        <fullName evidence="1">Selenide, water dikinase</fullName>
        <ecNumber evidence="1">2.7.9.3</ecNumber>
    </recommendedName>
    <alternativeName>
        <fullName evidence="1">Selenium donor protein</fullName>
    </alternativeName>
    <alternativeName>
        <fullName evidence="1">Selenophosphate synthase</fullName>
    </alternativeName>
</protein>
<feature type="chain" id="PRO_1000051601" description="Selenide, water dikinase">
    <location>
        <begin position="1"/>
        <end position="352"/>
    </location>
</feature>
<feature type="active site" evidence="1">
    <location>
        <position position="23"/>
    </location>
</feature>
<feature type="binding site" description="in other chain" evidence="1">
    <location>
        <position position="26"/>
    </location>
    <ligand>
        <name>ATP</name>
        <dbReference type="ChEBI" id="CHEBI:30616"/>
        <note>ligand shared between dimeric partners</note>
    </ligand>
</feature>
<feature type="binding site" description="in other chain" evidence="1">
    <location>
        <begin position="54"/>
        <end position="56"/>
    </location>
    <ligand>
        <name>ATP</name>
        <dbReference type="ChEBI" id="CHEBI:30616"/>
        <note>ligand shared between dimeric partners</note>
    </ligand>
</feature>
<feature type="binding site" evidence="1">
    <location>
        <position position="57"/>
    </location>
    <ligand>
        <name>Mg(2+)</name>
        <dbReference type="ChEBI" id="CHEBI:18420"/>
    </ligand>
</feature>
<feature type="binding site" description="in other chain" evidence="1">
    <location>
        <position position="74"/>
    </location>
    <ligand>
        <name>ATP</name>
        <dbReference type="ChEBI" id="CHEBI:30616"/>
        <note>ligand shared between dimeric partners</note>
    </ligand>
</feature>
<feature type="binding site" description="in other chain" evidence="1">
    <location>
        <position position="97"/>
    </location>
    <ligand>
        <name>ATP</name>
        <dbReference type="ChEBI" id="CHEBI:30616"/>
        <note>ligand shared between dimeric partners</note>
    </ligand>
</feature>
<feature type="binding site" evidence="1">
    <location>
        <position position="97"/>
    </location>
    <ligand>
        <name>Mg(2+)</name>
        <dbReference type="ChEBI" id="CHEBI:18420"/>
    </ligand>
</feature>
<feature type="binding site" evidence="1">
    <location>
        <begin position="145"/>
        <end position="147"/>
    </location>
    <ligand>
        <name>ATP</name>
        <dbReference type="ChEBI" id="CHEBI:30616"/>
        <note>ligand shared between dimeric partners</note>
    </ligand>
</feature>
<feature type="binding site" evidence="1">
    <location>
        <position position="233"/>
    </location>
    <ligand>
        <name>Mg(2+)</name>
        <dbReference type="ChEBI" id="CHEBI:18420"/>
    </ligand>
</feature>
<feature type="site" description="Important for catalytic activity" evidence="1">
    <location>
        <position position="26"/>
    </location>
</feature>
<reference key="1">
    <citation type="submission" date="2007-02" db="EMBL/GenBank/DDBJ databases">
        <title>Complete sequence of chromosome of Shewanella baltica OS155.</title>
        <authorList>
            <consortium name="US DOE Joint Genome Institute"/>
            <person name="Copeland A."/>
            <person name="Lucas S."/>
            <person name="Lapidus A."/>
            <person name="Barry K."/>
            <person name="Detter J.C."/>
            <person name="Glavina del Rio T."/>
            <person name="Hammon N."/>
            <person name="Israni S."/>
            <person name="Dalin E."/>
            <person name="Tice H."/>
            <person name="Pitluck S."/>
            <person name="Sims D.R."/>
            <person name="Brettin T."/>
            <person name="Bruce D."/>
            <person name="Han C."/>
            <person name="Tapia R."/>
            <person name="Brainard J."/>
            <person name="Schmutz J."/>
            <person name="Larimer F."/>
            <person name="Land M."/>
            <person name="Hauser L."/>
            <person name="Kyrpides N."/>
            <person name="Mikhailova N."/>
            <person name="Brettar I."/>
            <person name="Klappenbach J."/>
            <person name="Konstantinidis K."/>
            <person name="Rodrigues J."/>
            <person name="Tiedje J."/>
            <person name="Richardson P."/>
        </authorList>
    </citation>
    <scope>NUCLEOTIDE SEQUENCE [LARGE SCALE GENOMIC DNA]</scope>
    <source>
        <strain>OS155 / ATCC BAA-1091</strain>
    </source>
</reference>
<organism>
    <name type="scientific">Shewanella baltica (strain OS155 / ATCC BAA-1091)</name>
    <dbReference type="NCBI Taxonomy" id="325240"/>
    <lineage>
        <taxon>Bacteria</taxon>
        <taxon>Pseudomonadati</taxon>
        <taxon>Pseudomonadota</taxon>
        <taxon>Gammaproteobacteria</taxon>
        <taxon>Alteromonadales</taxon>
        <taxon>Shewanellaceae</taxon>
        <taxon>Shewanella</taxon>
    </lineage>
</organism>